<dbReference type="EC" id="4.1.1.39" evidence="1"/>
<dbReference type="EMBL" id="M58391">
    <property type="protein sequence ID" value="AAA82699.1"/>
    <property type="molecule type" value="Genomic_DNA"/>
</dbReference>
<dbReference type="SMR" id="Q01874"/>
<dbReference type="GO" id="GO:0009507">
    <property type="term" value="C:chloroplast"/>
    <property type="evidence" value="ECO:0007669"/>
    <property type="project" value="UniProtKB-SubCell"/>
</dbReference>
<dbReference type="GO" id="GO:0000287">
    <property type="term" value="F:magnesium ion binding"/>
    <property type="evidence" value="ECO:0007669"/>
    <property type="project" value="UniProtKB-UniRule"/>
</dbReference>
<dbReference type="GO" id="GO:0004497">
    <property type="term" value="F:monooxygenase activity"/>
    <property type="evidence" value="ECO:0007669"/>
    <property type="project" value="UniProtKB-KW"/>
</dbReference>
<dbReference type="GO" id="GO:0016984">
    <property type="term" value="F:ribulose-bisphosphate carboxylase activity"/>
    <property type="evidence" value="ECO:0007669"/>
    <property type="project" value="UniProtKB-UniRule"/>
</dbReference>
<dbReference type="GO" id="GO:0009853">
    <property type="term" value="P:photorespiration"/>
    <property type="evidence" value="ECO:0007669"/>
    <property type="project" value="UniProtKB-KW"/>
</dbReference>
<dbReference type="GO" id="GO:0019253">
    <property type="term" value="P:reductive pentose-phosphate cycle"/>
    <property type="evidence" value="ECO:0007669"/>
    <property type="project" value="UniProtKB-UniRule"/>
</dbReference>
<dbReference type="CDD" id="cd08212">
    <property type="entry name" value="RuBisCO_large_I"/>
    <property type="match status" value="1"/>
</dbReference>
<dbReference type="FunFam" id="3.20.20.110:FF:000001">
    <property type="entry name" value="Ribulose bisphosphate carboxylase large chain"/>
    <property type="match status" value="1"/>
</dbReference>
<dbReference type="FunFam" id="3.30.70.150:FF:000001">
    <property type="entry name" value="Ribulose bisphosphate carboxylase large chain"/>
    <property type="match status" value="1"/>
</dbReference>
<dbReference type="Gene3D" id="3.20.20.110">
    <property type="entry name" value="Ribulose bisphosphate carboxylase, large subunit, C-terminal domain"/>
    <property type="match status" value="1"/>
</dbReference>
<dbReference type="Gene3D" id="3.30.70.150">
    <property type="entry name" value="RuBisCO large subunit, N-terminal domain"/>
    <property type="match status" value="1"/>
</dbReference>
<dbReference type="HAMAP" id="MF_01338">
    <property type="entry name" value="RuBisCO_L_type1"/>
    <property type="match status" value="1"/>
</dbReference>
<dbReference type="InterPro" id="IPR033966">
    <property type="entry name" value="RuBisCO"/>
</dbReference>
<dbReference type="InterPro" id="IPR020878">
    <property type="entry name" value="RuBisCo_large_chain_AS"/>
</dbReference>
<dbReference type="InterPro" id="IPR000685">
    <property type="entry name" value="RuBisCO_lsu_C"/>
</dbReference>
<dbReference type="InterPro" id="IPR036376">
    <property type="entry name" value="RuBisCO_lsu_C_sf"/>
</dbReference>
<dbReference type="InterPro" id="IPR017443">
    <property type="entry name" value="RuBisCO_lsu_fd_N"/>
</dbReference>
<dbReference type="InterPro" id="IPR036422">
    <property type="entry name" value="RuBisCO_lsu_N_sf"/>
</dbReference>
<dbReference type="InterPro" id="IPR020888">
    <property type="entry name" value="RuBisCO_lsuI"/>
</dbReference>
<dbReference type="NCBIfam" id="NF003252">
    <property type="entry name" value="PRK04208.1"/>
    <property type="match status" value="1"/>
</dbReference>
<dbReference type="PANTHER" id="PTHR42704">
    <property type="entry name" value="RIBULOSE BISPHOSPHATE CARBOXYLASE"/>
    <property type="match status" value="1"/>
</dbReference>
<dbReference type="PANTHER" id="PTHR42704:SF15">
    <property type="entry name" value="RIBULOSE BISPHOSPHATE CARBOXYLASE LARGE CHAIN"/>
    <property type="match status" value="1"/>
</dbReference>
<dbReference type="Pfam" id="PF00016">
    <property type="entry name" value="RuBisCO_large"/>
    <property type="match status" value="1"/>
</dbReference>
<dbReference type="Pfam" id="PF02788">
    <property type="entry name" value="RuBisCO_large_N"/>
    <property type="match status" value="1"/>
</dbReference>
<dbReference type="SFLD" id="SFLDG01052">
    <property type="entry name" value="RuBisCO"/>
    <property type="match status" value="1"/>
</dbReference>
<dbReference type="SFLD" id="SFLDS00014">
    <property type="entry name" value="RuBisCO"/>
    <property type="match status" value="1"/>
</dbReference>
<dbReference type="SFLD" id="SFLDG00301">
    <property type="entry name" value="RuBisCO-like_proteins"/>
    <property type="match status" value="1"/>
</dbReference>
<dbReference type="SUPFAM" id="SSF51649">
    <property type="entry name" value="RuBisCo, C-terminal domain"/>
    <property type="match status" value="1"/>
</dbReference>
<dbReference type="SUPFAM" id="SSF54966">
    <property type="entry name" value="RuBisCO, large subunit, small (N-terminal) domain"/>
    <property type="match status" value="1"/>
</dbReference>
<dbReference type="PROSITE" id="PS00157">
    <property type="entry name" value="RUBISCO_LARGE"/>
    <property type="match status" value="1"/>
</dbReference>
<gene>
    <name evidence="1" type="primary">rbcL</name>
</gene>
<reference key="1">
    <citation type="journal article" date="1992" name="Proc. Natl. Acad. Sci. U.S.A.">
        <title>Extensive variation in evolutionary rate of rbcL gene sequences among seed plants.</title>
        <authorList>
            <person name="Bousquet J."/>
            <person name="Strauss S.H."/>
            <person name="Doerksen A.H."/>
            <person name="Price R.A."/>
        </authorList>
    </citation>
    <scope>NUCLEOTIDE SEQUENCE [GENOMIC DNA]</scope>
</reference>
<accession>Q01874</accession>
<geneLocation type="chloroplast"/>
<feature type="propeptide" id="PRO_0000031383" evidence="1">
    <location>
        <begin position="1"/>
        <end position="2"/>
    </location>
</feature>
<feature type="chain" id="PRO_0000031384" description="Ribulose bisphosphate carboxylase large chain">
    <location>
        <begin position="3"/>
        <end position="475"/>
    </location>
</feature>
<feature type="active site" description="Proton acceptor" evidence="1">
    <location>
        <position position="175"/>
    </location>
</feature>
<feature type="active site" description="Proton acceptor" evidence="1">
    <location>
        <position position="294"/>
    </location>
</feature>
<feature type="binding site" description="in homodimeric partner" evidence="1">
    <location>
        <position position="123"/>
    </location>
    <ligand>
        <name>substrate</name>
    </ligand>
</feature>
<feature type="binding site" evidence="1">
    <location>
        <position position="173"/>
    </location>
    <ligand>
        <name>substrate</name>
    </ligand>
</feature>
<feature type="binding site" evidence="1">
    <location>
        <position position="177"/>
    </location>
    <ligand>
        <name>substrate</name>
    </ligand>
</feature>
<feature type="binding site" description="via carbamate group" evidence="1">
    <location>
        <position position="201"/>
    </location>
    <ligand>
        <name>Mg(2+)</name>
        <dbReference type="ChEBI" id="CHEBI:18420"/>
    </ligand>
</feature>
<feature type="binding site" evidence="1">
    <location>
        <position position="203"/>
    </location>
    <ligand>
        <name>Mg(2+)</name>
        <dbReference type="ChEBI" id="CHEBI:18420"/>
    </ligand>
</feature>
<feature type="binding site" evidence="1">
    <location>
        <position position="204"/>
    </location>
    <ligand>
        <name>Mg(2+)</name>
        <dbReference type="ChEBI" id="CHEBI:18420"/>
    </ligand>
</feature>
<feature type="binding site" evidence="1">
    <location>
        <position position="295"/>
    </location>
    <ligand>
        <name>substrate</name>
    </ligand>
</feature>
<feature type="binding site" evidence="1">
    <location>
        <position position="327"/>
    </location>
    <ligand>
        <name>substrate</name>
    </ligand>
</feature>
<feature type="binding site" evidence="1">
    <location>
        <position position="379"/>
    </location>
    <ligand>
        <name>substrate</name>
    </ligand>
</feature>
<feature type="site" description="Transition state stabilizer" evidence="1">
    <location>
        <position position="334"/>
    </location>
</feature>
<feature type="modified residue" description="N-acetylproline" evidence="1">
    <location>
        <position position="3"/>
    </location>
</feature>
<feature type="modified residue" description="N6,N6,N6-trimethyllysine" evidence="1">
    <location>
        <position position="14"/>
    </location>
</feature>
<feature type="modified residue" description="N6-carboxylysine" evidence="1">
    <location>
        <position position="201"/>
    </location>
</feature>
<feature type="disulfide bond" description="Interchain; in linked form" evidence="1">
    <location>
        <position position="247"/>
    </location>
</feature>
<proteinExistence type="inferred from homology"/>
<sequence>MSPQTETKASVGFKAGVKDYKLTYHTPDYQTKDTDILAAFRVTPQPGVPPEEAGAAVAAESSTGTWTTVWTDGLTSLDRYKGRCYHIEPVAGEENQFIAYVAYPLDLFEEGSVTNMFTSIVGNVFGFKALRALRLEDLRIPTSYSKTFQGPPHGIQVERDKLNKYGRPLLGCTIKPKLGLSAKNYGRAVYECLRGGLDFTKDDENVNSQPFMRWRDRFVFCAEAIYKAQAETGEIKGHYLNATAGTCEEMIKRAVFARELGVPIVMHDYLTGGFTANTSLAHYCRDNGLLLHIHRAMHAVIDRQKNHGIHFRVLAKALRMSGGDHIHAGTVVGKLEGEREITLGFVDLLRDDYIEKDRSRGIYFTQDWVSLPGVLPVASGGIHVWHMPALTEIFGDDSVLQFGGGTLGHPWGNAPGAVANRVALEACVQARNEGRDLAREGNEIIREAAKWSPELAAACEVWKEIKFEFPAMDTL</sequence>
<evidence type="ECO:0000255" key="1">
    <source>
        <dbReference type="HAMAP-Rule" id="MF_01338"/>
    </source>
</evidence>
<protein>
    <recommendedName>
        <fullName evidence="1">Ribulose bisphosphate carboxylase large chain</fullName>
        <shortName evidence="1">RuBisCO large subunit</shortName>
        <ecNumber evidence="1">4.1.1.39</ecNumber>
    </recommendedName>
</protein>
<comment type="function">
    <text evidence="1">RuBisCO catalyzes two reactions: the carboxylation of D-ribulose 1,5-bisphosphate, the primary event in carbon dioxide fixation, as well as the oxidative fragmentation of the pentose substrate in the photorespiration process. Both reactions occur simultaneously and in competition at the same active site.</text>
</comment>
<comment type="catalytic activity">
    <reaction evidence="1">
        <text>2 (2R)-3-phosphoglycerate + 2 H(+) = D-ribulose 1,5-bisphosphate + CO2 + H2O</text>
        <dbReference type="Rhea" id="RHEA:23124"/>
        <dbReference type="ChEBI" id="CHEBI:15377"/>
        <dbReference type="ChEBI" id="CHEBI:15378"/>
        <dbReference type="ChEBI" id="CHEBI:16526"/>
        <dbReference type="ChEBI" id="CHEBI:57870"/>
        <dbReference type="ChEBI" id="CHEBI:58272"/>
        <dbReference type="EC" id="4.1.1.39"/>
    </reaction>
</comment>
<comment type="catalytic activity">
    <reaction evidence="1">
        <text>D-ribulose 1,5-bisphosphate + O2 = 2-phosphoglycolate + (2R)-3-phosphoglycerate + 2 H(+)</text>
        <dbReference type="Rhea" id="RHEA:36631"/>
        <dbReference type="ChEBI" id="CHEBI:15378"/>
        <dbReference type="ChEBI" id="CHEBI:15379"/>
        <dbReference type="ChEBI" id="CHEBI:57870"/>
        <dbReference type="ChEBI" id="CHEBI:58033"/>
        <dbReference type="ChEBI" id="CHEBI:58272"/>
    </reaction>
</comment>
<comment type="cofactor">
    <cofactor evidence="1">
        <name>Mg(2+)</name>
        <dbReference type="ChEBI" id="CHEBI:18420"/>
    </cofactor>
    <text evidence="1">Binds 1 Mg(2+) ion per subunit.</text>
</comment>
<comment type="subunit">
    <text evidence="1">Heterohexadecamer of 8 large chains and 8 small chains; disulfide-linked. The disulfide link is formed within the large subunit homodimers.</text>
</comment>
<comment type="subcellular location">
    <subcellularLocation>
        <location>Plastid</location>
        <location>Chloroplast</location>
    </subcellularLocation>
</comment>
<comment type="PTM">
    <text evidence="1">The disulfide bond which can form in the large chain dimeric partners within the hexadecamer appears to be associated with oxidative stress and protein turnover.</text>
</comment>
<comment type="miscellaneous">
    <text evidence="1">The basic functional RuBisCO is composed of a large chain homodimer in a 'head-to-tail' conformation. In form I RuBisCO this homodimer is arranged in a barrel-like tetramer with the small subunits forming a tetrameric 'cap' on each end of the 'barrel'.</text>
</comment>
<comment type="similarity">
    <text evidence="1">Belongs to the RuBisCO large chain family. Type I subfamily.</text>
</comment>
<name>RBL_QUERU</name>
<organism>
    <name type="scientific">Quercus rubra</name>
    <name type="common">Northern red oak</name>
    <name type="synonym">Quercus borealis</name>
    <dbReference type="NCBI Taxonomy" id="3512"/>
    <lineage>
        <taxon>Eukaryota</taxon>
        <taxon>Viridiplantae</taxon>
        <taxon>Streptophyta</taxon>
        <taxon>Embryophyta</taxon>
        <taxon>Tracheophyta</taxon>
        <taxon>Spermatophyta</taxon>
        <taxon>Magnoliopsida</taxon>
        <taxon>eudicotyledons</taxon>
        <taxon>Gunneridae</taxon>
        <taxon>Pentapetalae</taxon>
        <taxon>rosids</taxon>
        <taxon>fabids</taxon>
        <taxon>Fagales</taxon>
        <taxon>Fagaceae</taxon>
        <taxon>Quercus</taxon>
    </lineage>
</organism>
<keyword id="KW-0007">Acetylation</keyword>
<keyword id="KW-0113">Calvin cycle</keyword>
<keyword id="KW-0120">Carbon dioxide fixation</keyword>
<keyword id="KW-0150">Chloroplast</keyword>
<keyword id="KW-1015">Disulfide bond</keyword>
<keyword id="KW-0456">Lyase</keyword>
<keyword id="KW-0460">Magnesium</keyword>
<keyword id="KW-0479">Metal-binding</keyword>
<keyword id="KW-0488">Methylation</keyword>
<keyword id="KW-0503">Monooxygenase</keyword>
<keyword id="KW-0560">Oxidoreductase</keyword>
<keyword id="KW-0601">Photorespiration</keyword>
<keyword id="KW-0602">Photosynthesis</keyword>
<keyword id="KW-0934">Plastid</keyword>